<proteinExistence type="evidence at transcript level"/>
<keyword id="KW-0238">DNA-binding</keyword>
<keyword id="KW-0479">Metal-binding</keyword>
<keyword id="KW-1185">Reference proteome</keyword>
<keyword id="KW-0677">Repeat</keyword>
<keyword id="KW-0808">Transferase</keyword>
<keyword id="KW-0833">Ubl conjugation pathway</keyword>
<keyword id="KW-0862">Zinc</keyword>
<keyword id="KW-0863">Zinc-finger</keyword>
<organism>
    <name type="scientific">Oryza sativa subsp. japonica</name>
    <name type="common">Rice</name>
    <dbReference type="NCBI Taxonomy" id="39947"/>
    <lineage>
        <taxon>Eukaryota</taxon>
        <taxon>Viridiplantae</taxon>
        <taxon>Streptophyta</taxon>
        <taxon>Embryophyta</taxon>
        <taxon>Tracheophyta</taxon>
        <taxon>Spermatophyta</taxon>
        <taxon>Magnoliopsida</taxon>
        <taxon>Liliopsida</taxon>
        <taxon>Poales</taxon>
        <taxon>Poaceae</taxon>
        <taxon>BOP clade</taxon>
        <taxon>Oryzoideae</taxon>
        <taxon>Oryzeae</taxon>
        <taxon>Oryzinae</taxon>
        <taxon>Oryza</taxon>
        <taxon>Oryza sativa</taxon>
    </lineage>
</organism>
<dbReference type="EC" id="2.3.2.27" evidence="6"/>
<dbReference type="EMBL" id="AP003507">
    <property type="protein sequence ID" value="BAD61579.1"/>
    <property type="molecule type" value="Genomic_DNA"/>
</dbReference>
<dbReference type="EMBL" id="AP003543">
    <property type="protein sequence ID" value="BAD61603.1"/>
    <property type="molecule type" value="Genomic_DNA"/>
</dbReference>
<dbReference type="EMBL" id="AP008212">
    <property type="protein sequence ID" value="BAF19419.1"/>
    <property type="molecule type" value="Genomic_DNA"/>
</dbReference>
<dbReference type="EMBL" id="AP014962">
    <property type="protein sequence ID" value="BAS97489.1"/>
    <property type="molecule type" value="Genomic_DNA"/>
</dbReference>
<dbReference type="EMBL" id="CM000143">
    <property type="protein sequence ID" value="EEE65606.1"/>
    <property type="molecule type" value="Genomic_DNA"/>
</dbReference>
<dbReference type="EMBL" id="AK120250">
    <property type="protein sequence ID" value="BAG99935.1"/>
    <property type="molecule type" value="mRNA"/>
</dbReference>
<dbReference type="RefSeq" id="XP_015643585.1">
    <property type="nucleotide sequence ID" value="XM_015788099.1"/>
</dbReference>
<dbReference type="FunCoup" id="Q5ZA07">
    <property type="interactions" value="578"/>
</dbReference>
<dbReference type="STRING" id="39947.Q5ZA07"/>
<dbReference type="PaxDb" id="39947-Q5ZA07"/>
<dbReference type="EnsemblPlants" id="Os06t0318700-01">
    <property type="protein sequence ID" value="Os06t0318700-01"/>
    <property type="gene ID" value="Os06g0318700"/>
</dbReference>
<dbReference type="Gramene" id="Os06t0318700-01">
    <property type="protein sequence ID" value="Os06t0318700-01"/>
    <property type="gene ID" value="Os06g0318700"/>
</dbReference>
<dbReference type="KEGG" id="dosa:Os06g0318700"/>
<dbReference type="eggNOG" id="KOG1039">
    <property type="taxonomic scope" value="Eukaryota"/>
</dbReference>
<dbReference type="HOGENOM" id="CLU_040815_1_0_1"/>
<dbReference type="InParanoid" id="Q5ZA07"/>
<dbReference type="OMA" id="QQTNVEM"/>
<dbReference type="OrthoDB" id="411372at2759"/>
<dbReference type="UniPathway" id="UPA00143"/>
<dbReference type="Proteomes" id="UP000000763">
    <property type="component" value="Chromosome 6"/>
</dbReference>
<dbReference type="Proteomes" id="UP000007752">
    <property type="component" value="Chromosome 6"/>
</dbReference>
<dbReference type="Proteomes" id="UP000059680">
    <property type="component" value="Chromosome 6"/>
</dbReference>
<dbReference type="GO" id="GO:0003677">
    <property type="term" value="F:DNA binding"/>
    <property type="evidence" value="ECO:0007669"/>
    <property type="project" value="UniProtKB-KW"/>
</dbReference>
<dbReference type="GO" id="GO:0061630">
    <property type="term" value="F:ubiquitin protein ligase activity"/>
    <property type="evidence" value="ECO:0000318"/>
    <property type="project" value="GO_Central"/>
</dbReference>
<dbReference type="GO" id="GO:0008270">
    <property type="term" value="F:zinc ion binding"/>
    <property type="evidence" value="ECO:0007669"/>
    <property type="project" value="UniProtKB-KW"/>
</dbReference>
<dbReference type="GO" id="GO:0000209">
    <property type="term" value="P:protein polyubiquitination"/>
    <property type="evidence" value="ECO:0007669"/>
    <property type="project" value="InterPro"/>
</dbReference>
<dbReference type="GO" id="GO:0016567">
    <property type="term" value="P:protein ubiquitination"/>
    <property type="evidence" value="ECO:0000318"/>
    <property type="project" value="GO_Central"/>
</dbReference>
<dbReference type="CDD" id="cd16521">
    <property type="entry name" value="RING-HC_MKRN"/>
    <property type="match status" value="1"/>
</dbReference>
<dbReference type="Gene3D" id="3.30.1370.210">
    <property type="match status" value="1"/>
</dbReference>
<dbReference type="Gene3D" id="1.20.120.1350">
    <property type="entry name" value="Pneumovirus matrix protein 2 (M2), zinc-binding domain"/>
    <property type="match status" value="1"/>
</dbReference>
<dbReference type="Gene3D" id="3.30.40.10">
    <property type="entry name" value="Zinc/RING finger domain, C3HC4 (zinc finger)"/>
    <property type="match status" value="1"/>
</dbReference>
<dbReference type="InterPro" id="IPR045072">
    <property type="entry name" value="MKRN-like"/>
</dbReference>
<dbReference type="InterPro" id="IPR041367">
    <property type="entry name" value="Znf-CCCH_4"/>
</dbReference>
<dbReference type="InterPro" id="IPR018957">
    <property type="entry name" value="Znf_C3HC4_RING-type"/>
</dbReference>
<dbReference type="InterPro" id="IPR000571">
    <property type="entry name" value="Znf_CCCH"/>
</dbReference>
<dbReference type="InterPro" id="IPR036855">
    <property type="entry name" value="Znf_CCCH_sf"/>
</dbReference>
<dbReference type="InterPro" id="IPR001841">
    <property type="entry name" value="Znf_RING"/>
</dbReference>
<dbReference type="InterPro" id="IPR013083">
    <property type="entry name" value="Znf_RING/FYVE/PHD"/>
</dbReference>
<dbReference type="InterPro" id="IPR017907">
    <property type="entry name" value="Znf_RING_CS"/>
</dbReference>
<dbReference type="PANTHER" id="PTHR11224:SF10">
    <property type="entry name" value="IP09428P-RELATED"/>
    <property type="match status" value="1"/>
</dbReference>
<dbReference type="PANTHER" id="PTHR11224">
    <property type="entry name" value="MAKORIN-RELATED"/>
    <property type="match status" value="1"/>
</dbReference>
<dbReference type="Pfam" id="PF00097">
    <property type="entry name" value="zf-C3HC4"/>
    <property type="match status" value="1"/>
</dbReference>
<dbReference type="Pfam" id="PF00642">
    <property type="entry name" value="zf-CCCH"/>
    <property type="match status" value="1"/>
</dbReference>
<dbReference type="Pfam" id="PF14608">
    <property type="entry name" value="zf-CCCH_2"/>
    <property type="match status" value="2"/>
</dbReference>
<dbReference type="Pfam" id="PF18044">
    <property type="entry name" value="zf-CCCH_4"/>
    <property type="match status" value="1"/>
</dbReference>
<dbReference type="SMART" id="SM00184">
    <property type="entry name" value="RING"/>
    <property type="match status" value="1"/>
</dbReference>
<dbReference type="SMART" id="SM00356">
    <property type="entry name" value="ZnF_C3H1"/>
    <property type="match status" value="4"/>
</dbReference>
<dbReference type="SUPFAM" id="SSF90229">
    <property type="entry name" value="CCCH zinc finger"/>
    <property type="match status" value="2"/>
</dbReference>
<dbReference type="SUPFAM" id="SSF57850">
    <property type="entry name" value="RING/U-box"/>
    <property type="match status" value="1"/>
</dbReference>
<dbReference type="PROSITE" id="PS50103">
    <property type="entry name" value="ZF_C3H1"/>
    <property type="match status" value="4"/>
</dbReference>
<dbReference type="PROSITE" id="PS00518">
    <property type="entry name" value="ZF_RING_1"/>
    <property type="match status" value="1"/>
</dbReference>
<dbReference type="PROSITE" id="PS50089">
    <property type="entry name" value="ZF_RING_2"/>
    <property type="match status" value="1"/>
</dbReference>
<feature type="chain" id="PRO_0000346835" description="E3 ubiquitin-protein ligase makorin">
    <location>
        <begin position="1"/>
        <end position="368"/>
    </location>
</feature>
<feature type="zinc finger region" description="C3H1-type 1" evidence="3">
    <location>
        <begin position="2"/>
        <end position="29"/>
    </location>
</feature>
<feature type="zinc finger region" description="C3H1-type 2" evidence="3">
    <location>
        <begin position="30"/>
        <end position="57"/>
    </location>
</feature>
<feature type="zinc finger region" description="C3H1-type 3" evidence="3">
    <location>
        <begin position="147"/>
        <end position="174"/>
    </location>
</feature>
<feature type="zinc finger region" description="RING-type" evidence="2">
    <location>
        <begin position="216"/>
        <end position="274"/>
    </location>
</feature>
<feature type="zinc finger region" description="C3H1-type 4" evidence="3">
    <location>
        <begin position="303"/>
        <end position="332"/>
    </location>
</feature>
<feature type="region of interest" description="Disordered" evidence="4">
    <location>
        <begin position="58"/>
        <end position="81"/>
    </location>
</feature>
<feature type="region of interest" description="Makorin-type Cys-His">
    <location>
        <begin position="175"/>
        <end position="202"/>
    </location>
</feature>
<feature type="compositionally biased region" description="Low complexity" evidence="4">
    <location>
        <begin position="69"/>
        <end position="78"/>
    </location>
</feature>
<name>C3H41_ORYSJ</name>
<comment type="function">
    <text evidence="1">E3 ubiquitin ligase catalyzing the covalent attachment of ubiquitin moieties onto substrate proteins.</text>
</comment>
<comment type="catalytic activity">
    <reaction evidence="6">
        <text>S-ubiquitinyl-[E2 ubiquitin-conjugating enzyme]-L-cysteine + [acceptor protein]-L-lysine = [E2 ubiquitin-conjugating enzyme]-L-cysteine + N(6)-ubiquitinyl-[acceptor protein]-L-lysine.</text>
        <dbReference type="EC" id="2.3.2.27"/>
    </reaction>
</comment>
<comment type="pathway">
    <text>Protein modification; protein ubiquitination.</text>
</comment>
<comment type="tissue specificity">
    <text evidence="5">Expressed in primary roots and leaves. Detected in vascular bundle tissues.</text>
</comment>
<comment type="developmental stage">
    <text evidence="5">Expressed in dry seeds. Increased expression throughout imbibition and germination and when radicle and shoots are emerging. Up-regulated during cell differentiation.</text>
</comment>
<sequence>MSTKRVLCKFFMHGACLKGEYCEFSHDWNDQPNNVCTFYQKGSCSYGSRCRYDHVKVSRNPTVAPPPSSSTTTRASSSLQPLSFGRPHHVGYQADSSNPRQQISMDVLAHSGSKPVWRNDFQHESVLEDGIDWSISPTVQNQTTLSPADLPICSFAAGGNCPYGEECPQMHGDLCTTCGKMCLHPYRPDEREEHTKLCEKNHKRLESLKRSQEIECSVCLDRVLSKPTAAERKFGLLSECDHPFCISCIRNWRNNSPTSGMDVNSALRACPICRKLSYYVIPSVLWYFSKEEKLEIIDNYKAKLKSIDCKYFDFGTGTCPFGSSCFYKHAYRDGRLEEVILRHLDADDGSTVIAKNIRLSDFLSRLHL</sequence>
<gene>
    <name type="primary">MKRN</name>
    <name type="ordered locus">Os06g0318700</name>
    <name type="ordered locus">LOC_Os06g21390</name>
    <name evidence="7" type="ORF">OsJ_21146</name>
    <name type="ORF">P0468A12.33</name>
    <name type="ORF">P0592B08.7</name>
</gene>
<protein>
    <recommendedName>
        <fullName>E3 ubiquitin-protein ligase makorin</fullName>
        <ecNumber evidence="6">2.3.2.27</ecNumber>
    </recommendedName>
    <alternativeName>
        <fullName evidence="6">RING-type E3 ubiquitin transferase makorin</fullName>
    </alternativeName>
    <alternativeName>
        <fullName>Zinc finger CCCH domain-containing protein 41</fullName>
        <shortName>OsC3H41</shortName>
    </alternativeName>
</protein>
<reference key="1">
    <citation type="journal article" date="2007" name="Plant Physiol. Biochem.">
        <title>Sequence, expression and tissue localization of a gene encoding a makorin RING zinc-finger protein in germinating rice (Oryza sativa L. ssp. Japonica) seeds.</title>
        <authorList>
            <person name="Arumugam T.U."/>
            <person name="Davies E."/>
            <person name="Morita E.H."/>
            <person name="Abe S."/>
        </authorList>
    </citation>
    <scope>NUCLEOTIDE SEQUENCE [MRNA]</scope>
    <scope>TISSUE SPECIFICITY</scope>
    <scope>DEVELOPMENTAL STAGE</scope>
</reference>
<reference key="2">
    <citation type="journal article" date="2005" name="Nature">
        <title>The map-based sequence of the rice genome.</title>
        <authorList>
            <consortium name="International rice genome sequencing project (IRGSP)"/>
        </authorList>
    </citation>
    <scope>NUCLEOTIDE SEQUENCE [LARGE SCALE GENOMIC DNA]</scope>
    <source>
        <strain>cv. Nipponbare</strain>
    </source>
</reference>
<reference key="3">
    <citation type="journal article" date="2008" name="Nucleic Acids Res.">
        <title>The rice annotation project database (RAP-DB): 2008 update.</title>
        <authorList>
            <consortium name="The rice annotation project (RAP)"/>
        </authorList>
    </citation>
    <scope>GENOME REANNOTATION</scope>
    <source>
        <strain>cv. Nipponbare</strain>
    </source>
</reference>
<reference key="4">
    <citation type="journal article" date="2013" name="Rice">
        <title>Improvement of the Oryza sativa Nipponbare reference genome using next generation sequence and optical map data.</title>
        <authorList>
            <person name="Kawahara Y."/>
            <person name="de la Bastide M."/>
            <person name="Hamilton J.P."/>
            <person name="Kanamori H."/>
            <person name="McCombie W.R."/>
            <person name="Ouyang S."/>
            <person name="Schwartz D.C."/>
            <person name="Tanaka T."/>
            <person name="Wu J."/>
            <person name="Zhou S."/>
            <person name="Childs K.L."/>
            <person name="Davidson R.M."/>
            <person name="Lin H."/>
            <person name="Quesada-Ocampo L."/>
            <person name="Vaillancourt B."/>
            <person name="Sakai H."/>
            <person name="Lee S.S."/>
            <person name="Kim J."/>
            <person name="Numa H."/>
            <person name="Itoh T."/>
            <person name="Buell C.R."/>
            <person name="Matsumoto T."/>
        </authorList>
    </citation>
    <scope>GENOME REANNOTATION</scope>
    <source>
        <strain>cv. Nipponbare</strain>
    </source>
</reference>
<reference key="5">
    <citation type="journal article" date="2005" name="PLoS Biol.">
        <title>The genomes of Oryza sativa: a history of duplications.</title>
        <authorList>
            <person name="Yu J."/>
            <person name="Wang J."/>
            <person name="Lin W."/>
            <person name="Li S."/>
            <person name="Li H."/>
            <person name="Zhou J."/>
            <person name="Ni P."/>
            <person name="Dong W."/>
            <person name="Hu S."/>
            <person name="Zeng C."/>
            <person name="Zhang J."/>
            <person name="Zhang Y."/>
            <person name="Li R."/>
            <person name="Xu Z."/>
            <person name="Li S."/>
            <person name="Li X."/>
            <person name="Zheng H."/>
            <person name="Cong L."/>
            <person name="Lin L."/>
            <person name="Yin J."/>
            <person name="Geng J."/>
            <person name="Li G."/>
            <person name="Shi J."/>
            <person name="Liu J."/>
            <person name="Lv H."/>
            <person name="Li J."/>
            <person name="Wang J."/>
            <person name="Deng Y."/>
            <person name="Ran L."/>
            <person name="Shi X."/>
            <person name="Wang X."/>
            <person name="Wu Q."/>
            <person name="Li C."/>
            <person name="Ren X."/>
            <person name="Wang J."/>
            <person name="Wang X."/>
            <person name="Li D."/>
            <person name="Liu D."/>
            <person name="Zhang X."/>
            <person name="Ji Z."/>
            <person name="Zhao W."/>
            <person name="Sun Y."/>
            <person name="Zhang Z."/>
            <person name="Bao J."/>
            <person name="Han Y."/>
            <person name="Dong L."/>
            <person name="Ji J."/>
            <person name="Chen P."/>
            <person name="Wu S."/>
            <person name="Liu J."/>
            <person name="Xiao Y."/>
            <person name="Bu D."/>
            <person name="Tan J."/>
            <person name="Yang L."/>
            <person name="Ye C."/>
            <person name="Zhang J."/>
            <person name="Xu J."/>
            <person name="Zhou Y."/>
            <person name="Yu Y."/>
            <person name="Zhang B."/>
            <person name="Zhuang S."/>
            <person name="Wei H."/>
            <person name="Liu B."/>
            <person name="Lei M."/>
            <person name="Yu H."/>
            <person name="Li Y."/>
            <person name="Xu H."/>
            <person name="Wei S."/>
            <person name="He X."/>
            <person name="Fang L."/>
            <person name="Zhang Z."/>
            <person name="Zhang Y."/>
            <person name="Huang X."/>
            <person name="Su Z."/>
            <person name="Tong W."/>
            <person name="Li J."/>
            <person name="Tong Z."/>
            <person name="Li S."/>
            <person name="Ye J."/>
            <person name="Wang L."/>
            <person name="Fang L."/>
            <person name="Lei T."/>
            <person name="Chen C.-S."/>
            <person name="Chen H.-C."/>
            <person name="Xu Z."/>
            <person name="Li H."/>
            <person name="Huang H."/>
            <person name="Zhang F."/>
            <person name="Xu H."/>
            <person name="Li N."/>
            <person name="Zhao C."/>
            <person name="Li S."/>
            <person name="Dong L."/>
            <person name="Huang Y."/>
            <person name="Li L."/>
            <person name="Xi Y."/>
            <person name="Qi Q."/>
            <person name="Li W."/>
            <person name="Zhang B."/>
            <person name="Hu W."/>
            <person name="Zhang Y."/>
            <person name="Tian X."/>
            <person name="Jiao Y."/>
            <person name="Liang X."/>
            <person name="Jin J."/>
            <person name="Gao L."/>
            <person name="Zheng W."/>
            <person name="Hao B."/>
            <person name="Liu S.-M."/>
            <person name="Wang W."/>
            <person name="Yuan L."/>
            <person name="Cao M."/>
            <person name="McDermott J."/>
            <person name="Samudrala R."/>
            <person name="Wang J."/>
            <person name="Wong G.K.-S."/>
            <person name="Yang H."/>
        </authorList>
    </citation>
    <scope>NUCLEOTIDE SEQUENCE [LARGE SCALE GENOMIC DNA]</scope>
    <source>
        <strain>cv. Nipponbare</strain>
    </source>
</reference>
<reference key="6">
    <citation type="journal article" date="2003" name="Science">
        <title>Collection, mapping, and annotation of over 28,000 cDNA clones from japonica rice.</title>
        <authorList>
            <consortium name="The rice full-length cDNA consortium"/>
        </authorList>
    </citation>
    <scope>NUCLEOTIDE SEQUENCE [LARGE SCALE MRNA]</scope>
    <source>
        <strain>cv. Nipponbare</strain>
    </source>
</reference>
<reference key="7">
    <citation type="journal article" date="2008" name="BMC Genomics">
        <title>Genome-wide analysis of CCCH zinc finger family in Arabidopsis and rice.</title>
        <authorList>
            <person name="Wang D."/>
            <person name="Guo Y."/>
            <person name="Wu C."/>
            <person name="Yang G."/>
            <person name="Li Y."/>
            <person name="Zheng C."/>
        </authorList>
    </citation>
    <scope>NOMENCLATURE</scope>
</reference>
<evidence type="ECO:0000250" key="1"/>
<evidence type="ECO:0000255" key="2">
    <source>
        <dbReference type="PROSITE-ProRule" id="PRU00175"/>
    </source>
</evidence>
<evidence type="ECO:0000255" key="3">
    <source>
        <dbReference type="PROSITE-ProRule" id="PRU00723"/>
    </source>
</evidence>
<evidence type="ECO:0000256" key="4">
    <source>
        <dbReference type="SAM" id="MobiDB-lite"/>
    </source>
</evidence>
<evidence type="ECO:0000269" key="5">
    <source>
    </source>
</evidence>
<evidence type="ECO:0000305" key="6"/>
<evidence type="ECO:0000312" key="7">
    <source>
        <dbReference type="EMBL" id="EEE65606.1"/>
    </source>
</evidence>
<accession>Q5ZA07</accession>
<accession>B7F5N8</accession>